<accession>C0JAQ8</accession>
<keyword id="KW-0204">Cytolysis</keyword>
<keyword id="KW-1061">Dermonecrotic toxin</keyword>
<keyword id="KW-1015">Disulfide bond</keyword>
<keyword id="KW-0354">Hemolysis</keyword>
<keyword id="KW-0442">Lipid degradation</keyword>
<keyword id="KW-0443">Lipid metabolism</keyword>
<keyword id="KW-0456">Lyase</keyword>
<keyword id="KW-0460">Magnesium</keyword>
<keyword id="KW-0479">Metal-binding</keyword>
<keyword id="KW-0964">Secreted</keyword>
<keyword id="KW-0800">Toxin</keyword>
<organism>
    <name type="scientific">Loxosceles hirsuta</name>
    <name type="common">Recluse spider</name>
    <dbReference type="NCBI Taxonomy" id="571525"/>
    <lineage>
        <taxon>Eukaryota</taxon>
        <taxon>Metazoa</taxon>
        <taxon>Ecdysozoa</taxon>
        <taxon>Arthropoda</taxon>
        <taxon>Chelicerata</taxon>
        <taxon>Arachnida</taxon>
        <taxon>Araneae</taxon>
        <taxon>Araneomorphae</taxon>
        <taxon>Haplogynae</taxon>
        <taxon>Scytodoidea</taxon>
        <taxon>Sicariidae</taxon>
        <taxon>Loxosceles</taxon>
    </lineage>
</organism>
<protein>
    <recommendedName>
        <fullName evidence="6">Dermonecrotic toxin LhSicTox-alphaIA2aii</fullName>
        <ecNumber evidence="4">4.6.1.-</ecNumber>
    </recommendedName>
    <alternativeName>
        <fullName>Phospholipase D</fullName>
        <shortName>PLD</shortName>
    </alternativeName>
    <alternativeName>
        <fullName>Sphingomyelin phosphodiesterase D</fullName>
        <shortName>SMD</shortName>
        <shortName>SMase D</shortName>
        <shortName>Sphingomyelinase D</shortName>
    </alternativeName>
</protein>
<name>A1IA2_LOXHI</name>
<dbReference type="EC" id="4.6.1.-" evidence="4"/>
<dbReference type="EMBL" id="FJ171343">
    <property type="protein sequence ID" value="ACN48839.1"/>
    <property type="molecule type" value="mRNA"/>
</dbReference>
<dbReference type="SMR" id="C0JAQ8"/>
<dbReference type="GO" id="GO:0005576">
    <property type="term" value="C:extracellular region"/>
    <property type="evidence" value="ECO:0007669"/>
    <property type="project" value="UniProtKB-SubCell"/>
</dbReference>
<dbReference type="GO" id="GO:0016829">
    <property type="term" value="F:lyase activity"/>
    <property type="evidence" value="ECO:0007669"/>
    <property type="project" value="UniProtKB-KW"/>
</dbReference>
<dbReference type="GO" id="GO:0046872">
    <property type="term" value="F:metal ion binding"/>
    <property type="evidence" value="ECO:0007669"/>
    <property type="project" value="UniProtKB-KW"/>
</dbReference>
<dbReference type="GO" id="GO:0008081">
    <property type="term" value="F:phosphoric diester hydrolase activity"/>
    <property type="evidence" value="ECO:0007669"/>
    <property type="project" value="InterPro"/>
</dbReference>
<dbReference type="GO" id="GO:0090729">
    <property type="term" value="F:toxin activity"/>
    <property type="evidence" value="ECO:0007669"/>
    <property type="project" value="UniProtKB-KW"/>
</dbReference>
<dbReference type="GO" id="GO:0031640">
    <property type="term" value="P:killing of cells of another organism"/>
    <property type="evidence" value="ECO:0007669"/>
    <property type="project" value="UniProtKB-KW"/>
</dbReference>
<dbReference type="GO" id="GO:0016042">
    <property type="term" value="P:lipid catabolic process"/>
    <property type="evidence" value="ECO:0007669"/>
    <property type="project" value="UniProtKB-KW"/>
</dbReference>
<dbReference type="CDD" id="cd08576">
    <property type="entry name" value="GDPD_like_SMaseD_PLD"/>
    <property type="match status" value="1"/>
</dbReference>
<dbReference type="Gene3D" id="3.20.20.190">
    <property type="entry name" value="Phosphatidylinositol (PI) phosphodiesterase"/>
    <property type="match status" value="1"/>
</dbReference>
<dbReference type="InterPro" id="IPR017946">
    <property type="entry name" value="PLC-like_Pdiesterase_TIM-brl"/>
</dbReference>
<dbReference type="Pfam" id="PF13653">
    <property type="entry name" value="GDPD_2"/>
    <property type="match status" value="1"/>
</dbReference>
<dbReference type="SUPFAM" id="SSF51695">
    <property type="entry name" value="PLC-like phosphodiesterases"/>
    <property type="match status" value="1"/>
</dbReference>
<feature type="chain" id="PRO_0000392748" description="Dermonecrotic toxin LhSicTox-alphaIA2aii">
    <location>
        <begin position="1" status="less than"/>
        <end position="273"/>
    </location>
</feature>
<feature type="active site" evidence="5">
    <location>
        <position position="5"/>
    </location>
</feature>
<feature type="active site" description="Nucleophile" evidence="5">
    <location>
        <position position="41"/>
    </location>
</feature>
<feature type="binding site" evidence="5">
    <location>
        <position position="25"/>
    </location>
    <ligand>
        <name>Mg(2+)</name>
        <dbReference type="ChEBI" id="CHEBI:18420"/>
    </ligand>
</feature>
<feature type="binding site" evidence="5">
    <location>
        <position position="27"/>
    </location>
    <ligand>
        <name>Mg(2+)</name>
        <dbReference type="ChEBI" id="CHEBI:18420"/>
    </ligand>
</feature>
<feature type="binding site" evidence="5">
    <location>
        <position position="85"/>
    </location>
    <ligand>
        <name>Mg(2+)</name>
        <dbReference type="ChEBI" id="CHEBI:18420"/>
    </ligand>
</feature>
<feature type="disulfide bond" evidence="3">
    <location>
        <begin position="45"/>
        <end position="51"/>
    </location>
</feature>
<feature type="disulfide bond" evidence="3">
    <location>
        <begin position="47"/>
        <end position="190"/>
    </location>
</feature>
<feature type="non-terminal residue">
    <location>
        <position position="1"/>
    </location>
</feature>
<proteinExistence type="evidence at transcript level"/>
<sequence>ALMGHMVNAIYQIDEFVNLGANSIETDVSFDDNANPEYTYHGIPCDCGRSCLKWENYNDFLKGLRSATTPGNSKYQSKLILVVFDLKTGSLYDNQASEAGKKLAKNLLKHYWNNGNNGGRAYIVLSIPDLNHYPLIKGFTDTLKQEGHPELLEKVGYDFSGNDAVGDVAKAYKKAGVSGHVWQSDGITNCLLRGPTRVKEAVANRDSGNGYINKVYYWTVDKRATTRDALDAGVDGVMTNYPDVIADVMNEAAYKNKVRLATYEDSPWVTFKK</sequence>
<comment type="function">
    <text evidence="1 3">Dermonecrotic toxins cleave the phosphodiester linkage between the phosphate and headgroup of certain phospholipids (sphingolipid and lysolipid substrates), forming an alcohol (often choline) and a cyclic phosphate (By similarity). This toxin acts on sphingomyelin (SM) (By similarity). It may also act on ceramide phosphoethanolamine (CPE), lysophosphatidylcholine (LPC) and lysophosphatidylethanolamine (LPE), but not on lysophosphatidylserine (LPS), and lysophosphatidylglycerol (LPG) (By similarity). It acts by transphosphatidylation, releasing exclusively cyclic phosphate products as second products (By similarity). Induces dermonecrosis, hemolysis, increased vascular permeability, edema, inflammatory response, and platelet aggregation (By similarity).</text>
</comment>
<comment type="catalytic activity">
    <reaction evidence="1">
        <text>an N-(acyl)-sphingosylphosphocholine = an N-(acyl)-sphingosyl-1,3-cyclic phosphate + choline</text>
        <dbReference type="Rhea" id="RHEA:60652"/>
        <dbReference type="ChEBI" id="CHEBI:15354"/>
        <dbReference type="ChEBI" id="CHEBI:64583"/>
        <dbReference type="ChEBI" id="CHEBI:143892"/>
    </reaction>
</comment>
<comment type="catalytic activity">
    <reaction evidence="1">
        <text>an N-(acyl)-sphingosylphosphoethanolamine = an N-(acyl)-sphingosyl-1,3-cyclic phosphate + ethanolamine</text>
        <dbReference type="Rhea" id="RHEA:60648"/>
        <dbReference type="ChEBI" id="CHEBI:57603"/>
        <dbReference type="ChEBI" id="CHEBI:143891"/>
        <dbReference type="ChEBI" id="CHEBI:143892"/>
    </reaction>
</comment>
<comment type="catalytic activity">
    <reaction evidence="1">
        <text>a 1-acyl-sn-glycero-3-phosphocholine = a 1-acyl-sn-glycero-2,3-cyclic phosphate + choline</text>
        <dbReference type="Rhea" id="RHEA:60700"/>
        <dbReference type="ChEBI" id="CHEBI:15354"/>
        <dbReference type="ChEBI" id="CHEBI:58168"/>
        <dbReference type="ChEBI" id="CHEBI:143947"/>
    </reaction>
</comment>
<comment type="catalytic activity">
    <reaction evidence="1">
        <text>a 1-acyl-sn-glycero-3-phosphoethanolamine = a 1-acyl-sn-glycero-2,3-cyclic phosphate + ethanolamine</text>
        <dbReference type="Rhea" id="RHEA:60704"/>
        <dbReference type="ChEBI" id="CHEBI:57603"/>
        <dbReference type="ChEBI" id="CHEBI:64381"/>
        <dbReference type="ChEBI" id="CHEBI:143947"/>
    </reaction>
</comment>
<comment type="cofactor">
    <cofactor evidence="5">
        <name>Mg(2+)</name>
        <dbReference type="ChEBI" id="CHEBI:18420"/>
    </cofactor>
    <text evidence="5">Binds 1 Mg(2+) ion per subunit.</text>
</comment>
<comment type="subcellular location">
    <subcellularLocation>
        <location evidence="8">Secreted</location>
    </subcellularLocation>
</comment>
<comment type="tissue specificity">
    <text evidence="8">Expressed by the venom gland.</text>
</comment>
<comment type="similarity">
    <text evidence="7">Belongs to the arthropod phospholipase D family. Class II subfamily.</text>
</comment>
<comment type="caution">
    <text evidence="1 2 4">The most common activity assay for dermonecrotic toxins detects enzymatic activity by monitoring choline release from substrate. Liberation of choline from sphingomyelin (SM) or lysophosphatidylcholine (LPC) is commonly assumed to result from substrate hydrolysis, giving either ceramide-1-phosphate (C1P) or lysophosphatidic acid (LPA), respectively, as a second product. However, two studies from Lajoie and colleagues (2013 and 2015) report the observation of exclusive formation of cyclic phosphate products as second products, resulting from intramolecular transphosphatidylation. Cyclic phosphates have vastly different biological properties from their monoester counterparts, and they may be relevant to the pathology of brown spider envenomation.</text>
</comment>
<reference key="1">
    <citation type="journal article" date="2009" name="Mol. Biol. Evol.">
        <title>Molecular evolution, functional variation, and proposed nomenclature of the gene family that includes sphingomyelinase D in sicariid spider venoms.</title>
        <authorList>
            <person name="Binford G.J."/>
            <person name="Bodner M.R."/>
            <person name="Cordes M.H."/>
            <person name="Baldwin K.L."/>
            <person name="Rynerson M.R."/>
            <person name="Burns S.N."/>
            <person name="Zobel-Thropp P.A."/>
        </authorList>
    </citation>
    <scope>NUCLEOTIDE SEQUENCE [MRNA]</scope>
    <scope>NOMENCLATURE</scope>
    <source>
        <tissue>Venom gland</tissue>
    </source>
</reference>
<evidence type="ECO:0000250" key="1">
    <source>
        <dbReference type="UniProtKB" id="A0A0D4WTV1"/>
    </source>
</evidence>
<evidence type="ECO:0000250" key="2">
    <source>
        <dbReference type="UniProtKB" id="A0A0D4WV12"/>
    </source>
</evidence>
<evidence type="ECO:0000250" key="3">
    <source>
        <dbReference type="UniProtKB" id="P0CE80"/>
    </source>
</evidence>
<evidence type="ECO:0000250" key="4">
    <source>
        <dbReference type="UniProtKB" id="Q4ZFU2"/>
    </source>
</evidence>
<evidence type="ECO:0000250" key="5">
    <source>
        <dbReference type="UniProtKB" id="Q8I914"/>
    </source>
</evidence>
<evidence type="ECO:0000303" key="6">
    <source>
    </source>
</evidence>
<evidence type="ECO:0000305" key="7"/>
<evidence type="ECO:0000305" key="8">
    <source>
    </source>
</evidence>